<feature type="chain" id="PRO_0000403973" description="4-hydroxy-4-methyl-2-oxoglutarate aldolase/4-carboxy-4-hydroxy-2-oxoadipate aldolase">
    <location>
        <begin position="1"/>
        <end position="227"/>
    </location>
</feature>
<feature type="binding site" evidence="1">
    <location>
        <begin position="97"/>
        <end position="100"/>
    </location>
    <ligand>
        <name>substrate</name>
    </ligand>
</feature>
<feature type="binding site" evidence="1">
    <location>
        <position position="119"/>
    </location>
    <ligand>
        <name>substrate</name>
    </ligand>
</feature>
<feature type="binding site" evidence="1">
    <location>
        <position position="120"/>
    </location>
    <ligand>
        <name>Mg(2+)</name>
        <dbReference type="ChEBI" id="CHEBI:18420"/>
    </ligand>
</feature>
<gene>
    <name evidence="7" type="primary">proA</name>
</gene>
<name>HMGA_PSEOC</name>
<organism>
    <name type="scientific">Pseudomonas straminea</name>
    <dbReference type="NCBI Taxonomy" id="47882"/>
    <lineage>
        <taxon>Bacteria</taxon>
        <taxon>Pseudomonadati</taxon>
        <taxon>Pseudomonadota</taxon>
        <taxon>Gammaproteobacteria</taxon>
        <taxon>Pseudomonadales</taxon>
        <taxon>Pseudomonadaceae</taxon>
        <taxon>Phytopseudomonas</taxon>
    </lineage>
</organism>
<comment type="function">
    <text evidence="2 4">Catalyzes the last step of the bacterial protocatechuate 4,5-cleavage pathway. Has a broad substrate specificity and catalyzes the aldol cleavage of 4-hydroxy-4-methyl-2-oxoglutarate, 4-hydroxy-2-oxoglutarate and 4-carboxy-4-hydroxy-2-oxoadipate, and the decarboxylation of oxaloacetate. Preferentially cleaves the L-isomer of 4-carboxy-4-hydroxy-2-oxoadipate, and has lower activity towards 4-hydroxy-4-methyl-2-oxoglutarate and 4-Hydroxy-2-oxoglutarate. Does not cleave 4-hydroxy-2-oxovalerate, citrate, 4-hydroxy-2-oxobutyrate, 2-oxoglutarate or fructose-1,6-bisphosphate.</text>
</comment>
<comment type="catalytic activity">
    <reaction evidence="2 4">
        <text>(4S)-4-hydroxy-2-oxoglutarate = glyoxylate + pyruvate</text>
        <dbReference type="Rhea" id="RHEA:35639"/>
        <dbReference type="ChEBI" id="CHEBI:15361"/>
        <dbReference type="ChEBI" id="CHEBI:36655"/>
        <dbReference type="ChEBI" id="CHEBI:71685"/>
        <dbReference type="EC" id="4.1.3.16"/>
    </reaction>
</comment>
<comment type="catalytic activity">
    <reaction evidence="2 4">
        <text>(4R)-4-hydroxy-2-oxoglutarate = glyoxylate + pyruvate</text>
        <dbReference type="Rhea" id="RHEA:30687"/>
        <dbReference type="ChEBI" id="CHEBI:15361"/>
        <dbReference type="ChEBI" id="CHEBI:36655"/>
        <dbReference type="ChEBI" id="CHEBI:62213"/>
        <dbReference type="EC" id="4.1.3.16"/>
    </reaction>
</comment>
<comment type="catalytic activity">
    <reaction evidence="2 4">
        <text>4-hydroxy-4-methyl-2-oxoglutarate = 2 pyruvate</text>
        <dbReference type="Rhea" id="RHEA:22748"/>
        <dbReference type="ChEBI" id="CHEBI:15361"/>
        <dbReference type="ChEBI" id="CHEBI:58276"/>
        <dbReference type="EC" id="4.1.3.17"/>
    </reaction>
</comment>
<comment type="catalytic activity">
    <reaction evidence="2 4">
        <text>2-hydroxy-4-oxobutane-1,2,4-tricarboxylate = oxaloacetate + pyruvate</text>
        <dbReference type="Rhea" id="RHEA:28935"/>
        <dbReference type="ChEBI" id="CHEBI:15361"/>
        <dbReference type="ChEBI" id="CHEBI:16452"/>
        <dbReference type="ChEBI" id="CHEBI:58075"/>
        <dbReference type="EC" id="4.1.3.17"/>
    </reaction>
</comment>
<comment type="catalytic activity">
    <reaction evidence="4">
        <text>oxaloacetate + H(+) = pyruvate + CO2</text>
        <dbReference type="Rhea" id="RHEA:15641"/>
        <dbReference type="ChEBI" id="CHEBI:15361"/>
        <dbReference type="ChEBI" id="CHEBI:15378"/>
        <dbReference type="ChEBI" id="CHEBI:16452"/>
        <dbReference type="ChEBI" id="CHEBI:16526"/>
        <dbReference type="EC" id="4.1.1.112"/>
    </reaction>
</comment>
<comment type="cofactor">
    <cofactor evidence="2 4">
        <name>Mg(2+)</name>
        <dbReference type="ChEBI" id="CHEBI:18420"/>
    </cofactor>
    <text evidence="2 4">Divalent metal cations. Probably Mg(2+).</text>
</comment>
<comment type="activity regulation">
    <text evidence="3 4 5">Cleavage of 4-carboxy-4-hydroxy-2-oxoadipate, and to a lesser extent 4-hydroxy-4-methyl-2-oxoglutarate, is inhibited by lysine modification caused by diethyl pyrocarbonate. Decarboxylation of oxaloacetate is unaffected by diethyl pyrocarbonate. Inhibited by BeCl(2), CaCl(2), NiCl(2), BaCl(2), HgCl(2), SrSO(4), CrCl(3) and FeCl(3). Partially inhibited by p-chloromercuribenzoate and N-ethylmaleimide. Activated by inorganic phosphate, arsenate, phosphorous acid, acetyl phosphate, thiamine diphosphate, ADP, ATP and diphosphate.</text>
</comment>
<comment type="biophysicochemical properties">
    <kinetics>
        <KM evidence="2 4 5">0.044 mM for DL-4-carboxy-4-hydroxy-2-oxoadipate</KM>
        <KM evidence="2 4 5">0.019 mM for L-4-carboxy-4-hydroxy-2-oxoadipate</KM>
        <KM evidence="2 4 5">0.15 mM for D-4-carboxy-4-hydroxy-2-oxoadipate</KM>
        <KM evidence="2 4 5">1.25 mM for DL-4-hydroxy-4-methyl-2-oxoglutarate</KM>
        <KM evidence="2 4 5">0.24 mM for DL-4-hydroxy-2-oxoglutarate</KM>
        <KM evidence="2 4 5">0.5 mM for oxaloacetate</KM>
        <Vmax evidence="2 4 5">1250.0 umol/min/mg enzyme with DL-4-carboxy-4-hydroxy-2-oxoadipate as substrate</Vmax>
        <Vmax evidence="2 4 5">1220.0 umol/min/mg enzyme with L-4-carboxy-4-hydroxy-2-oxoadipate as substrate</Vmax>
        <Vmax evidence="2 4 5">67.6 umol/min/mg enzyme with D-4-carboxy-4-hydroxy-2-oxoadipate as substrate</Vmax>
        <Vmax evidence="2 4 5">213.0 umol/min/mg enzyme with DL-4-hydroxy-4-methyl-2-oxoglutarate as substrate</Vmax>
        <Vmax evidence="2 4 5">1.3 umol/min/mg enzyme with DL-4-hydroxy-2-oxoglutarate as substrate</Vmax>
        <Vmax evidence="2 4 5">20.8 umol/min/mg enzyme with oxaloacetate as substrate</Vmax>
    </kinetics>
    <phDependence>
        <text evidence="2 4 5">Optimum pH varies depending on the substrate used and phosphate concentration. In the absence of inorganic phosphate pH optima are 6.6 for L-4-carboxy-4-hydroxy-2-oxoadipate, 8.0 for D-4-carboxy-4-hydroxy-2-oxoadipate, 6.7 and 8.0 for DL-4-carboxy-4-hydroxy-2-oxoadipate, 8.3 for DL-4-hydroxy-4-methyl-2-oxoglutarate, 9.3 for DL-4-hydroxy-2-oxoglutarate and 8.8 for oxaloacetate. In the presence of 3 mM inorganic phosphate pH optima are more alkaline: 8.2 for L-4-carboxy-4-hydroxy-2-oxoadipate, 8.6 for D-4-carboxy-4-hydroxy-2-oxoadipate, 8.2 for DL-4-carboxy-4-hydroxy-2-oxoadipate, 8.9 for DL-4-hydroxy-4-methyl-2-oxoglutarate, 9.4 for DL-4-hydroxy-2-oxoglutarate and 8.9 for oxaloacetate. Stable at pH 6.0 to pH 9.5.</text>
    </phDependence>
    <temperatureDependence>
        <text evidence="2 4 5">Retains 50% of maximum activity after incubation at 54 degrees Celsius for 10 minutes.</text>
    </temperatureDependence>
</comment>
<comment type="subunit">
    <text evidence="4">Homohexamer.</text>
</comment>
<comment type="induction">
    <text evidence="4">By growth on aromatic carboxylates such as phthalate, terephthalate, m-hydroxybenzoate and p-hydroxybenzoate.</text>
</comment>
<comment type="similarity">
    <text evidence="6">Belongs to the LigK/PcmE family.</text>
</comment>
<evidence type="ECO:0000250" key="1">
    <source>
        <dbReference type="UniProtKB" id="A5W059"/>
    </source>
</evidence>
<evidence type="ECO:0000269" key="2">
    <source>
    </source>
</evidence>
<evidence type="ECO:0000269" key="3">
    <source>
    </source>
</evidence>
<evidence type="ECO:0000269" key="4">
    <source>
    </source>
</evidence>
<evidence type="ECO:0000269" key="5">
    <source>
    </source>
</evidence>
<evidence type="ECO:0000305" key="6"/>
<evidence type="ECO:0000312" key="7">
    <source>
        <dbReference type="EMBL" id="BAB21456.3"/>
    </source>
</evidence>
<accession>Q9AQI0</accession>
<reference key="1">
    <citation type="journal article" date="2001" name="Biosci. Biotechnol. Biochem.">
        <title>Cloning, sequencing, and expression of the gene encoding 4-hydroxy-4-methyl-2-oxoglutarate aldolase from Pseudomonas ochraceae NGJ1.</title>
        <authorList>
            <person name="Maruyama K."/>
            <person name="Miwa M."/>
            <person name="Tsujii N."/>
            <person name="Nagai T."/>
            <person name="Tomita N."/>
            <person name="Harada T."/>
            <person name="Sobajima H."/>
            <person name="Sugisaki H."/>
        </authorList>
    </citation>
    <scope>NUCLEOTIDE SEQUENCE [GENOMIC DNA]</scope>
    <scope>PROTEIN SEQUENCE OF 1-22</scope>
    <scope>FUNCTION</scope>
    <scope>CATALYTIC ACTIVITY</scope>
    <scope>COFACTOR</scope>
    <scope>BIOPHYSICOCHEMICAL PROPERTIES</scope>
    <source>
        <strain evidence="7">NGJ1</strain>
    </source>
</reference>
<reference key="2">
    <citation type="journal article" date="1990" name="J. Biochem.">
        <title>Purification and properties of 4-hydroxy-4-methyl-2-oxoglutarate aldolase from Pseudomonas ochraceae grown on phthalate.</title>
        <authorList>
            <person name="Maruyama K."/>
        </authorList>
    </citation>
    <scope>FUNCTION</scope>
    <scope>CATALYTIC ACTIVITY</scope>
    <scope>COFACTOR</scope>
    <scope>ACTIVITY REGULATION</scope>
    <scope>BIOPHYSICOCHEMICAL PROPERTIES</scope>
    <scope>SUBUNIT</scope>
    <scope>INDUCTION</scope>
</reference>
<reference key="3">
    <citation type="journal article" date="1990" name="J. Biochem.">
        <title>Activation of Pseudomonas ochraceae 4-hydroxy-4-methyl-2-oxoglutarate aldolase by inorganic phosphate.</title>
        <authorList>
            <person name="Maruyama K."/>
        </authorList>
    </citation>
    <scope>ACTIVITY REGULATION</scope>
    <scope>BIOPHYSICOCHEMICAL PROPERTIES</scope>
</reference>
<reference key="4">
    <citation type="journal article" date="1991" name="J. Biochem.">
        <title>Chemical modification of Pseudomonas ochraceae 4-hydroxy-4-methyl-2-oxoglutarate aldolase by diethyl pyrocarbonate.</title>
        <authorList>
            <person name="Maruyama K."/>
        </authorList>
    </citation>
    <scope>ACTIVITY REGULATION</scope>
</reference>
<proteinExistence type="evidence at protein level"/>
<keyword id="KW-0903">Direct protein sequencing</keyword>
<keyword id="KW-0456">Lyase</keyword>
<keyword id="KW-0460">Magnesium</keyword>
<keyword id="KW-0479">Metal-binding</keyword>
<sequence>MYELGVVYRNIQRADRAAADGLAALGSATVHEAMGRVGLLKPYMRPIYAGKQVSGTAVTVLLQPGDNWMMHVAAEQIQPGDIVVAAVTAECTDGYFGDLLATSFQARGARALIIDAGVRDVKTLQEMDFPVWSKAISSKGTIKATLGSVNIPIVCAGMLVTPGDVIVADDDGVVCVPAARAVEVLAAAQKRESFEGEKRAKLASGVLGLDMYKMREPLEKAGLKYID</sequence>
<protein>
    <recommendedName>
        <fullName>4-hydroxy-4-methyl-2-oxoglutarate aldolase/4-carboxy-4-hydroxy-2-oxoadipate aldolase</fullName>
        <shortName>HMG/CHA aldolase</shortName>
        <ecNumber evidence="2 4">4.1.3.16</ecNumber>
        <ecNumber evidence="2 4">4.1.3.17</ecNumber>
    </recommendedName>
    <alternativeName>
        <fullName>4-hydroxy-2-oxoglutarate aldolase</fullName>
    </alternativeName>
    <alternativeName>
        <fullName>Oxaloacetate decarboxylase</fullName>
        <shortName>OAA decarboxylase</shortName>
        <ecNumber evidence="4">4.1.1.112</ecNumber>
    </alternativeName>
</protein>
<dbReference type="EC" id="4.1.3.16" evidence="2 4"/>
<dbReference type="EC" id="4.1.3.17" evidence="2 4"/>
<dbReference type="EC" id="4.1.1.112" evidence="4"/>
<dbReference type="EMBL" id="AB050935">
    <property type="protein sequence ID" value="BAB21456.3"/>
    <property type="molecule type" value="Genomic_DNA"/>
</dbReference>
<dbReference type="SMR" id="Q9AQI0"/>
<dbReference type="BioCyc" id="MetaCyc:MONOMER-3244"/>
<dbReference type="GO" id="GO:0106009">
    <property type="term" value="F:(4S)-4-hydroxy-2-oxoglutarate aldolase activity"/>
    <property type="evidence" value="ECO:0007669"/>
    <property type="project" value="RHEA"/>
</dbReference>
<dbReference type="GO" id="GO:0008700">
    <property type="term" value="F:(R,S)-4-hydroxy-2-oxoglutarate aldolase activity"/>
    <property type="evidence" value="ECO:0000314"/>
    <property type="project" value="UniProtKB"/>
</dbReference>
<dbReference type="GO" id="GO:0047443">
    <property type="term" value="F:4-hydroxy-4-methyl-2-oxoglutarate aldolase activity"/>
    <property type="evidence" value="ECO:0000314"/>
    <property type="project" value="UniProtKB"/>
</dbReference>
<dbReference type="GO" id="GO:0046872">
    <property type="term" value="F:metal ion binding"/>
    <property type="evidence" value="ECO:0007669"/>
    <property type="project" value="UniProtKB-KW"/>
</dbReference>
<dbReference type="GO" id="GO:0008948">
    <property type="term" value="F:oxaloacetate decarboxylase activity"/>
    <property type="evidence" value="ECO:0000314"/>
    <property type="project" value="UniProtKB"/>
</dbReference>
<dbReference type="GO" id="GO:0019619">
    <property type="term" value="P:3,4-dihydroxybenzoate catabolic process"/>
    <property type="evidence" value="ECO:0000314"/>
    <property type="project" value="UniProtKB"/>
</dbReference>
<dbReference type="CDD" id="cd16841">
    <property type="entry name" value="RraA_family"/>
    <property type="match status" value="1"/>
</dbReference>
<dbReference type="FunFam" id="3.50.30.40:FF:000002">
    <property type="entry name" value="4-carboxy-4-hydroxy-2-oxoadipate aldolase/oxaloacetate decarboxylase"/>
    <property type="match status" value="1"/>
</dbReference>
<dbReference type="Gene3D" id="3.50.30.40">
    <property type="entry name" value="Ribonuclease E inhibitor RraA/RraA-like"/>
    <property type="match status" value="1"/>
</dbReference>
<dbReference type="InterPro" id="IPR014165">
    <property type="entry name" value="LigK_PcmE"/>
</dbReference>
<dbReference type="InterPro" id="IPR005493">
    <property type="entry name" value="RraA/RraA-like"/>
</dbReference>
<dbReference type="InterPro" id="IPR036704">
    <property type="entry name" value="RraA/RraA-like_sf"/>
</dbReference>
<dbReference type="NCBIfam" id="TIGR02798">
    <property type="entry name" value="ligK_PcmE"/>
    <property type="match status" value="1"/>
</dbReference>
<dbReference type="NCBIfam" id="NF006731">
    <property type="entry name" value="PRK09262.1"/>
    <property type="match status" value="1"/>
</dbReference>
<dbReference type="PANTHER" id="PTHR33254">
    <property type="entry name" value="4-HYDROXY-4-METHYL-2-OXOGLUTARATE ALDOLASE 3-RELATED"/>
    <property type="match status" value="1"/>
</dbReference>
<dbReference type="PANTHER" id="PTHR33254:SF16">
    <property type="entry name" value="BLR3842 PROTEIN"/>
    <property type="match status" value="1"/>
</dbReference>
<dbReference type="Pfam" id="PF03737">
    <property type="entry name" value="RraA-like"/>
    <property type="match status" value="1"/>
</dbReference>
<dbReference type="SUPFAM" id="SSF89562">
    <property type="entry name" value="RraA-like"/>
    <property type="match status" value="1"/>
</dbReference>